<comment type="function">
    <text evidence="1">One of the primary rRNA binding proteins, it binds specifically to the 5'-end of 16S ribosomal RNA.</text>
</comment>
<comment type="subunit">
    <text evidence="1">Part of the 30S ribosomal subunit.</text>
</comment>
<comment type="subcellular location">
    <subcellularLocation>
        <location>Plastid</location>
        <location>Chloroplast</location>
    </subcellularLocation>
</comment>
<comment type="similarity">
    <text evidence="2">Belongs to the universal ribosomal protein uS17 family.</text>
</comment>
<protein>
    <recommendedName>
        <fullName evidence="2">Small ribosomal subunit protein uS17c</fullName>
    </recommendedName>
    <alternativeName>
        <fullName>30S ribosomal protein S17, chloroplastic</fullName>
    </alternativeName>
</protein>
<reference key="1">
    <citation type="journal article" date="2005" name="DNA Res.">
        <title>The complete plastid genome sequence of the haptophyte Emiliania huxleyi: a comparison to other plastid genomes.</title>
        <authorList>
            <person name="Sanchez-Puerta M.V."/>
            <person name="Bachvaroff T.R."/>
            <person name="Delwiche C.F."/>
        </authorList>
    </citation>
    <scope>NUCLEOTIDE SEQUENCE [LARGE SCALE GENOMIC DNA]</scope>
    <source>
        <strain>CCMP373 / CSIRO-CS-57 / BT6</strain>
    </source>
</reference>
<feature type="chain" id="PRO_0000232623" description="Small ribosomal subunit protein uS17c">
    <location>
        <begin position="1"/>
        <end position="82"/>
    </location>
</feature>
<sequence length="82" mass="9256">MVAKEKIGTVVSDKMLNTRIVAVSDRVSHKNYGKVITRTKRYVAHDIESNSKIGDKVKIQETRPISKSKNWILVSILEKSST</sequence>
<geneLocation type="chloroplast"/>
<dbReference type="EMBL" id="AY741371">
    <property type="protein sequence ID" value="AAX13909.1"/>
    <property type="molecule type" value="Genomic_DNA"/>
</dbReference>
<dbReference type="RefSeq" id="YP_277410.1">
    <property type="nucleotide sequence ID" value="NC_007288.1"/>
</dbReference>
<dbReference type="SMR" id="Q4G357"/>
<dbReference type="STRING" id="2903.Q4G357"/>
<dbReference type="GeneID" id="3562494"/>
<dbReference type="GO" id="GO:0009507">
    <property type="term" value="C:chloroplast"/>
    <property type="evidence" value="ECO:0007669"/>
    <property type="project" value="UniProtKB-SubCell"/>
</dbReference>
<dbReference type="GO" id="GO:0022627">
    <property type="term" value="C:cytosolic small ribosomal subunit"/>
    <property type="evidence" value="ECO:0007669"/>
    <property type="project" value="TreeGrafter"/>
</dbReference>
<dbReference type="GO" id="GO:0019843">
    <property type="term" value="F:rRNA binding"/>
    <property type="evidence" value="ECO:0007669"/>
    <property type="project" value="UniProtKB-UniRule"/>
</dbReference>
<dbReference type="GO" id="GO:0003735">
    <property type="term" value="F:structural constituent of ribosome"/>
    <property type="evidence" value="ECO:0007669"/>
    <property type="project" value="InterPro"/>
</dbReference>
<dbReference type="GO" id="GO:0006412">
    <property type="term" value="P:translation"/>
    <property type="evidence" value="ECO:0007669"/>
    <property type="project" value="UniProtKB-UniRule"/>
</dbReference>
<dbReference type="CDD" id="cd00364">
    <property type="entry name" value="Ribosomal_uS17"/>
    <property type="match status" value="1"/>
</dbReference>
<dbReference type="Gene3D" id="2.40.50.140">
    <property type="entry name" value="Nucleic acid-binding proteins"/>
    <property type="match status" value="1"/>
</dbReference>
<dbReference type="HAMAP" id="MF_01345_B">
    <property type="entry name" value="Ribosomal_uS17_B"/>
    <property type="match status" value="1"/>
</dbReference>
<dbReference type="InterPro" id="IPR012340">
    <property type="entry name" value="NA-bd_OB-fold"/>
</dbReference>
<dbReference type="InterPro" id="IPR000266">
    <property type="entry name" value="Ribosomal_uS17"/>
</dbReference>
<dbReference type="InterPro" id="IPR019984">
    <property type="entry name" value="Ribosomal_uS17_bact/chlr"/>
</dbReference>
<dbReference type="InterPro" id="IPR019979">
    <property type="entry name" value="Ribosomal_uS17_CS"/>
</dbReference>
<dbReference type="NCBIfam" id="NF004123">
    <property type="entry name" value="PRK05610.1"/>
    <property type="match status" value="1"/>
</dbReference>
<dbReference type="NCBIfam" id="TIGR03635">
    <property type="entry name" value="uS17_bact"/>
    <property type="match status" value="1"/>
</dbReference>
<dbReference type="PANTHER" id="PTHR10744">
    <property type="entry name" value="40S RIBOSOMAL PROTEIN S11 FAMILY MEMBER"/>
    <property type="match status" value="1"/>
</dbReference>
<dbReference type="PANTHER" id="PTHR10744:SF1">
    <property type="entry name" value="SMALL RIBOSOMAL SUBUNIT PROTEIN US17M"/>
    <property type="match status" value="1"/>
</dbReference>
<dbReference type="Pfam" id="PF00366">
    <property type="entry name" value="Ribosomal_S17"/>
    <property type="match status" value="1"/>
</dbReference>
<dbReference type="PRINTS" id="PR00973">
    <property type="entry name" value="RIBOSOMALS17"/>
</dbReference>
<dbReference type="SUPFAM" id="SSF50249">
    <property type="entry name" value="Nucleic acid-binding proteins"/>
    <property type="match status" value="1"/>
</dbReference>
<dbReference type="PROSITE" id="PS00056">
    <property type="entry name" value="RIBOSOMAL_S17"/>
    <property type="match status" value="1"/>
</dbReference>
<evidence type="ECO:0000250" key="1"/>
<evidence type="ECO:0000305" key="2"/>
<name>RR17_EMIHU</name>
<gene>
    <name type="primary">rps17</name>
</gene>
<keyword id="KW-0150">Chloroplast</keyword>
<keyword id="KW-0934">Plastid</keyword>
<keyword id="KW-0687">Ribonucleoprotein</keyword>
<keyword id="KW-0689">Ribosomal protein</keyword>
<keyword id="KW-0694">RNA-binding</keyword>
<keyword id="KW-0699">rRNA-binding</keyword>
<accession>Q4G357</accession>
<organism>
    <name type="scientific">Emiliania huxleyi</name>
    <name type="common">Coccolithophore</name>
    <name type="synonym">Pontosphaera huxleyi</name>
    <dbReference type="NCBI Taxonomy" id="2903"/>
    <lineage>
        <taxon>Eukaryota</taxon>
        <taxon>Haptista</taxon>
        <taxon>Haptophyta</taxon>
        <taxon>Prymnesiophyceae</taxon>
        <taxon>Isochrysidales</taxon>
        <taxon>Noelaerhabdaceae</taxon>
        <taxon>Emiliania</taxon>
    </lineage>
</organism>
<proteinExistence type="inferred from homology"/>